<keyword id="KW-0488">Methylation</keyword>
<keyword id="KW-0687">Ribonucleoprotein</keyword>
<keyword id="KW-0689">Ribosomal protein</keyword>
<keyword id="KW-0694">RNA-binding</keyword>
<keyword id="KW-0699">rRNA-binding</keyword>
<evidence type="ECO:0000255" key="1">
    <source>
        <dbReference type="HAMAP-Rule" id="MF_01325"/>
    </source>
</evidence>
<evidence type="ECO:0000256" key="2">
    <source>
        <dbReference type="SAM" id="MobiDB-lite"/>
    </source>
</evidence>
<evidence type="ECO:0000305" key="3"/>
<proteinExistence type="inferred from homology"/>
<gene>
    <name evidence="1" type="primary">rplC</name>
    <name type="ordered locus">Ent638_3751</name>
</gene>
<protein>
    <recommendedName>
        <fullName evidence="1">Large ribosomal subunit protein uL3</fullName>
    </recommendedName>
    <alternativeName>
        <fullName evidence="3">50S ribosomal protein L3</fullName>
    </alternativeName>
</protein>
<accession>A4WFC8</accession>
<organism>
    <name type="scientific">Enterobacter sp. (strain 638)</name>
    <dbReference type="NCBI Taxonomy" id="399742"/>
    <lineage>
        <taxon>Bacteria</taxon>
        <taxon>Pseudomonadati</taxon>
        <taxon>Pseudomonadota</taxon>
        <taxon>Gammaproteobacteria</taxon>
        <taxon>Enterobacterales</taxon>
        <taxon>Enterobacteriaceae</taxon>
        <taxon>Enterobacter</taxon>
    </lineage>
</organism>
<comment type="function">
    <text evidence="1">One of the primary rRNA binding proteins, it binds directly near the 3'-end of the 23S rRNA, where it nucleates assembly of the 50S subunit.</text>
</comment>
<comment type="subunit">
    <text evidence="1">Part of the 50S ribosomal subunit. Forms a cluster with proteins L14 and L19.</text>
</comment>
<comment type="PTM">
    <text evidence="1">Methylated by PrmB.</text>
</comment>
<comment type="similarity">
    <text evidence="1">Belongs to the universal ribosomal protein uL3 family.</text>
</comment>
<name>RL3_ENT38</name>
<reference key="1">
    <citation type="journal article" date="2010" name="PLoS Genet.">
        <title>Genome sequence of the plant growth promoting endophytic bacterium Enterobacter sp. 638.</title>
        <authorList>
            <person name="Taghavi S."/>
            <person name="van der Lelie D."/>
            <person name="Hoffman A."/>
            <person name="Zhang Y.B."/>
            <person name="Walla M.D."/>
            <person name="Vangronsveld J."/>
            <person name="Newman L."/>
            <person name="Monchy S."/>
        </authorList>
    </citation>
    <scope>NUCLEOTIDE SEQUENCE [LARGE SCALE GENOMIC DNA]</scope>
    <source>
        <strain>638</strain>
    </source>
</reference>
<sequence length="209" mass="22260">MIGLVGKKVGMTRIFTEDGVSIPVTVIEVEANRVTQVKDLANDGYRAVQVTTGSKKASRVTKPEAGHFAKAGVEAGRGLWEFRLAEGEEFTVGQDISVELFAEVKKVDVTGTSKGKGFAGTVKRWNFRTQDATHGNSLSHRVPGSIGQNQTPGKVFKGKKMAGQMGNERVTVQSLDVVRVDAERNLLLVKGAVPGATGSNLIVKPAVKA</sequence>
<feature type="chain" id="PRO_1000067563" description="Large ribosomal subunit protein uL3">
    <location>
        <begin position="1"/>
        <end position="209"/>
    </location>
</feature>
<feature type="region of interest" description="Disordered" evidence="2">
    <location>
        <begin position="132"/>
        <end position="153"/>
    </location>
</feature>
<feature type="modified residue" description="N5-methylglutamine" evidence="1">
    <location>
        <position position="150"/>
    </location>
</feature>
<dbReference type="EMBL" id="CP000653">
    <property type="protein sequence ID" value="ABP62408.1"/>
    <property type="molecule type" value="Genomic_DNA"/>
</dbReference>
<dbReference type="RefSeq" id="WP_015960717.1">
    <property type="nucleotide sequence ID" value="NC_009436.1"/>
</dbReference>
<dbReference type="SMR" id="A4WFC8"/>
<dbReference type="STRING" id="399742.Ent638_3751"/>
<dbReference type="GeneID" id="93306726"/>
<dbReference type="KEGG" id="ent:Ent638_3751"/>
<dbReference type="eggNOG" id="COG0087">
    <property type="taxonomic scope" value="Bacteria"/>
</dbReference>
<dbReference type="HOGENOM" id="CLU_044142_4_1_6"/>
<dbReference type="OrthoDB" id="9806135at2"/>
<dbReference type="Proteomes" id="UP000000230">
    <property type="component" value="Chromosome"/>
</dbReference>
<dbReference type="GO" id="GO:0022625">
    <property type="term" value="C:cytosolic large ribosomal subunit"/>
    <property type="evidence" value="ECO:0007669"/>
    <property type="project" value="TreeGrafter"/>
</dbReference>
<dbReference type="GO" id="GO:0019843">
    <property type="term" value="F:rRNA binding"/>
    <property type="evidence" value="ECO:0007669"/>
    <property type="project" value="UniProtKB-UniRule"/>
</dbReference>
<dbReference type="GO" id="GO:0003735">
    <property type="term" value="F:structural constituent of ribosome"/>
    <property type="evidence" value="ECO:0007669"/>
    <property type="project" value="InterPro"/>
</dbReference>
<dbReference type="GO" id="GO:0006412">
    <property type="term" value="P:translation"/>
    <property type="evidence" value="ECO:0007669"/>
    <property type="project" value="UniProtKB-UniRule"/>
</dbReference>
<dbReference type="FunFam" id="2.40.30.10:FF:000004">
    <property type="entry name" value="50S ribosomal protein L3"/>
    <property type="match status" value="1"/>
</dbReference>
<dbReference type="FunFam" id="3.30.160.810:FF:000001">
    <property type="entry name" value="50S ribosomal protein L3"/>
    <property type="match status" value="1"/>
</dbReference>
<dbReference type="Gene3D" id="3.30.160.810">
    <property type="match status" value="1"/>
</dbReference>
<dbReference type="Gene3D" id="2.40.30.10">
    <property type="entry name" value="Translation factors"/>
    <property type="match status" value="1"/>
</dbReference>
<dbReference type="HAMAP" id="MF_01325_B">
    <property type="entry name" value="Ribosomal_uL3_B"/>
    <property type="match status" value="1"/>
</dbReference>
<dbReference type="InterPro" id="IPR000597">
    <property type="entry name" value="Ribosomal_uL3"/>
</dbReference>
<dbReference type="InterPro" id="IPR019927">
    <property type="entry name" value="Ribosomal_uL3_bac/org-type"/>
</dbReference>
<dbReference type="InterPro" id="IPR019926">
    <property type="entry name" value="Ribosomal_uL3_CS"/>
</dbReference>
<dbReference type="InterPro" id="IPR009000">
    <property type="entry name" value="Transl_B-barrel_sf"/>
</dbReference>
<dbReference type="NCBIfam" id="TIGR03625">
    <property type="entry name" value="L3_bact"/>
    <property type="match status" value="1"/>
</dbReference>
<dbReference type="PANTHER" id="PTHR11229">
    <property type="entry name" value="50S RIBOSOMAL PROTEIN L3"/>
    <property type="match status" value="1"/>
</dbReference>
<dbReference type="PANTHER" id="PTHR11229:SF16">
    <property type="entry name" value="LARGE RIBOSOMAL SUBUNIT PROTEIN UL3C"/>
    <property type="match status" value="1"/>
</dbReference>
<dbReference type="Pfam" id="PF00297">
    <property type="entry name" value="Ribosomal_L3"/>
    <property type="match status" value="1"/>
</dbReference>
<dbReference type="SUPFAM" id="SSF50447">
    <property type="entry name" value="Translation proteins"/>
    <property type="match status" value="1"/>
</dbReference>
<dbReference type="PROSITE" id="PS00474">
    <property type="entry name" value="RIBOSOMAL_L3"/>
    <property type="match status" value="1"/>
</dbReference>